<gene>
    <name type="primary">F8</name>
    <name type="synonym">CF8</name>
</gene>
<proteinExistence type="evidence at protein level"/>
<keyword id="KW-0002">3D-structure</keyword>
<keyword id="KW-0011">Acute phase</keyword>
<keyword id="KW-0094">Blood coagulation</keyword>
<keyword id="KW-0106">Calcium</keyword>
<keyword id="KW-1015">Disulfide bond</keyword>
<keyword id="KW-0325">Glycoprotein</keyword>
<keyword id="KW-0356">Hemostasis</keyword>
<keyword id="KW-0479">Metal-binding</keyword>
<keyword id="KW-1185">Reference proteome</keyword>
<keyword id="KW-0677">Repeat</keyword>
<keyword id="KW-0964">Secreted</keyword>
<keyword id="KW-0732">Signal</keyword>
<keyword id="KW-0765">Sulfation</keyword>
<protein>
    <recommendedName>
        <fullName>Coagulation factor VIII</fullName>
    </recommendedName>
    <alternativeName>
        <fullName>Procoagulant component</fullName>
    </alternativeName>
</protein>
<name>FA8_PIG</name>
<feature type="signal peptide" evidence="3">
    <location>
        <begin position="1"/>
        <end position="19"/>
    </location>
</feature>
<feature type="chain" id="PRO_0000002973" description="Coagulation factor VIII">
    <location>
        <begin position="20"/>
        <end position="2133"/>
    </location>
</feature>
<feature type="domain" description="F5/8 type A 1">
    <location>
        <begin position="20"/>
        <end position="357"/>
    </location>
</feature>
<feature type="domain" description="Plastocyanin-like 1">
    <location>
        <begin position="20"/>
        <end position="199"/>
    </location>
</feature>
<feature type="domain" description="Plastocyanin-like 2">
    <location>
        <begin position="207"/>
        <end position="357"/>
    </location>
</feature>
<feature type="domain" description="F5/8 type A 2">
    <location>
        <begin position="399"/>
        <end position="730"/>
    </location>
</feature>
<feature type="domain" description="Plastocyanin-like 3">
    <location>
        <begin position="399"/>
        <end position="573"/>
    </location>
</feature>
<feature type="domain" description="Plastocyanin-like 4">
    <location>
        <begin position="583"/>
        <end position="730"/>
    </location>
</feature>
<feature type="domain" description="F5/8 type A 3">
    <location>
        <begin position="1495"/>
        <end position="1822"/>
    </location>
</feature>
<feature type="domain" description="Plastocyanin-like 5">
    <location>
        <begin position="1495"/>
        <end position="1659"/>
    </location>
</feature>
<feature type="domain" description="Plastocyanin-like 6">
    <location>
        <begin position="1669"/>
        <end position="1822"/>
    </location>
</feature>
<feature type="domain" description="F5/8 type C 1" evidence="4">
    <location>
        <begin position="1822"/>
        <end position="1970"/>
    </location>
</feature>
<feature type="domain" description="F5/8 type C 2" evidence="4">
    <location>
        <begin position="1975"/>
        <end position="2127"/>
    </location>
</feature>
<feature type="region of interest" description="B">
    <location>
        <begin position="760"/>
        <end position="1599"/>
    </location>
</feature>
<feature type="region of interest" description="Disordered" evidence="5">
    <location>
        <begin position="760"/>
        <end position="790"/>
    </location>
</feature>
<feature type="region of interest" description="Disordered" evidence="5">
    <location>
        <begin position="804"/>
        <end position="914"/>
    </location>
</feature>
<feature type="region of interest" description="Disordered" evidence="5">
    <location>
        <begin position="1042"/>
        <end position="1078"/>
    </location>
</feature>
<feature type="region of interest" description="Disordered" evidence="5">
    <location>
        <begin position="1160"/>
        <end position="1179"/>
    </location>
</feature>
<feature type="region of interest" description="Disordered" evidence="5">
    <location>
        <begin position="1200"/>
        <end position="1221"/>
    </location>
</feature>
<feature type="region of interest" description="Disordered" evidence="5">
    <location>
        <begin position="1358"/>
        <end position="1391"/>
    </location>
</feature>
<feature type="region of interest" description="Disordered" evidence="5">
    <location>
        <begin position="1406"/>
        <end position="1441"/>
    </location>
</feature>
<feature type="compositionally biased region" description="Polar residues" evidence="5">
    <location>
        <begin position="761"/>
        <end position="780"/>
    </location>
</feature>
<feature type="compositionally biased region" description="Basic and acidic residues" evidence="5">
    <location>
        <begin position="853"/>
        <end position="862"/>
    </location>
</feature>
<feature type="compositionally biased region" description="Basic and acidic residues" evidence="5">
    <location>
        <begin position="868"/>
        <end position="878"/>
    </location>
</feature>
<feature type="compositionally biased region" description="Low complexity" evidence="5">
    <location>
        <begin position="879"/>
        <end position="888"/>
    </location>
</feature>
<feature type="compositionally biased region" description="Polar residues" evidence="5">
    <location>
        <begin position="889"/>
        <end position="900"/>
    </location>
</feature>
<feature type="compositionally biased region" description="Low complexity" evidence="5">
    <location>
        <begin position="1060"/>
        <end position="1075"/>
    </location>
</feature>
<feature type="compositionally biased region" description="Basic and acidic residues" evidence="5">
    <location>
        <begin position="1378"/>
        <end position="1387"/>
    </location>
</feature>
<feature type="site" description="Cleavage; by thrombin" evidence="1">
    <location>
        <begin position="391"/>
        <end position="392"/>
    </location>
</feature>
<feature type="site" description="Cleavage; by thrombin" evidence="1">
    <location>
        <begin position="759"/>
        <end position="760"/>
    </location>
</feature>
<feature type="site" description="Cleavage (activation)" evidence="1">
    <location>
        <begin position="1449"/>
        <end position="1450"/>
    </location>
</feature>
<feature type="site" description="Cleavage; by thrombin" evidence="1">
    <location>
        <begin position="1490"/>
        <end position="1491"/>
    </location>
</feature>
<feature type="modified residue" description="Sulfotyrosine" evidence="1">
    <location>
        <position position="737"/>
    </location>
</feature>
<feature type="modified residue" description="Sulfotyrosine" evidence="1">
    <location>
        <position position="738"/>
    </location>
</feature>
<feature type="modified residue" description="Sulfotyrosine" evidence="1">
    <location>
        <position position="742"/>
    </location>
</feature>
<feature type="glycosylation site" description="N-linked (GlcNAc...) asparagine" evidence="3">
    <location>
        <position position="233"/>
    </location>
</feature>
<feature type="glycosylation site" description="N-linked (GlcNAc...) asparagine" evidence="3">
    <location>
        <position position="259"/>
    </location>
</feature>
<feature type="glycosylation site" description="N-linked (GlcNAc...) asparagine" evidence="3">
    <location>
        <position position="601"/>
    </location>
</feature>
<feature type="glycosylation site" description="N-linked (GlcNAc...) asparagine" evidence="3">
    <location>
        <position position="929"/>
    </location>
</feature>
<feature type="glycosylation site" description="N-linked (GlcNAc...) asparagine" evidence="3">
    <location>
        <position position="985"/>
    </location>
</feature>
<feature type="glycosylation site" description="N-linked (GlcNAc...) asparagine" evidence="3">
    <location>
        <position position="1025"/>
    </location>
</feature>
<feature type="glycosylation site" description="N-linked (GlcNAc...) asparagine" evidence="3">
    <location>
        <position position="1111"/>
    </location>
</feature>
<feature type="glycosylation site" description="N-linked (GlcNAc...) asparagine" evidence="3">
    <location>
        <position position="1181"/>
    </location>
</feature>
<feature type="glycosylation site" description="N-linked (GlcNAc...) asparagine" evidence="3">
    <location>
        <position position="1208"/>
    </location>
</feature>
<feature type="glycosylation site" description="N-linked (GlcNAc...) asparagine" evidence="3">
    <location>
        <position position="1245"/>
    </location>
</feature>
<feature type="glycosylation site" description="N-linked (GlcNAc...) asparagine" evidence="3">
    <location>
        <position position="1265"/>
    </location>
</feature>
<feature type="glycosylation site" description="N-linked (GlcNAc...) asparagine" evidence="3">
    <location>
        <position position="1335"/>
    </location>
</feature>
<feature type="glycosylation site" description="N-linked (GlcNAc...) asparagine" evidence="3">
    <location>
        <position position="1408"/>
    </location>
</feature>
<feature type="glycosylation site" description="N-linked (GlcNAc...) asparagine" evidence="3">
    <location>
        <position position="1611"/>
    </location>
</feature>
<feature type="glycosylation site" description="N-linked (GlcNAc...) asparagine" evidence="3">
    <location>
        <position position="1919"/>
    </location>
</feature>
<feature type="disulfide bond" evidence="6">
    <location>
        <begin position="173"/>
        <end position="199"/>
    </location>
</feature>
<feature type="disulfide bond" evidence="6">
    <location>
        <begin position="547"/>
        <end position="573"/>
    </location>
</feature>
<feature type="disulfide bond" evidence="6">
    <location>
        <begin position="1633"/>
        <end position="1659"/>
    </location>
</feature>
<feature type="disulfide bond" evidence="4">
    <location>
        <begin position="1822"/>
        <end position="1970"/>
    </location>
</feature>
<feature type="disulfide bond" evidence="4">
    <location>
        <begin position="1975"/>
        <end position="2127"/>
    </location>
</feature>
<feature type="sequence conflict" description="In Ref. 2; no nucleotide entry." evidence="6" ref="2">
    <original>N</original>
    <variation>M</variation>
    <location>
        <position position="713"/>
    </location>
</feature>
<feature type="sequence conflict" description="In Ref. 2; no nucleotide entry." evidence="6" ref="2">
    <original>I</original>
    <variation>T</variation>
    <location>
        <position position="734"/>
    </location>
</feature>
<feature type="sequence conflict" description="In Ref. 2; no nucleotide entry." evidence="6" ref="2">
    <original>G</original>
    <variation>Q</variation>
    <location>
        <position position="792"/>
    </location>
</feature>
<feature type="sequence conflict" description="In Ref. 2; no nucleotide entry." evidence="6" ref="2">
    <original>E</original>
    <variation>F</variation>
    <location>
        <position position="1133"/>
    </location>
</feature>
<feature type="sequence conflict" description="In Ref. 2; no nucleotide entry." evidence="6" ref="2">
    <original>I</original>
    <variation>L</variation>
    <location>
        <position position="1191"/>
    </location>
</feature>
<feature type="sequence conflict" description="In Ref. 2; no nucleotide entry." evidence="6" ref="2">
    <original>R</original>
    <variation>F</variation>
    <location>
        <position position="1209"/>
    </location>
</feature>
<feature type="sequence conflict" description="In Ref. 2; no nucleotide entry." evidence="6" ref="2">
    <original>C</original>
    <variation>G</variation>
    <location>
        <position position="1437"/>
    </location>
</feature>
<feature type="sequence conflict" description="In Ref. 2; no nucleotide entry." evidence="6" ref="2">
    <original>F</original>
    <variation>R</variation>
    <location>
        <position position="1456"/>
    </location>
</feature>
<feature type="sequence conflict" description="In Ref. 2; no nucleotide entry." evidence="6" ref="2">
    <original>F</original>
    <variation>R</variation>
    <location>
        <position position="1539"/>
    </location>
</feature>
<feature type="sequence conflict" description="In Ref. 2; no nucleotide entry." evidence="6" ref="2">
    <original>Q</original>
    <variation>N</variation>
    <location>
        <position position="1546"/>
    </location>
</feature>
<feature type="strand" evidence="8">
    <location>
        <begin position="21"/>
        <end position="24"/>
    </location>
</feature>
<feature type="strand" evidence="8">
    <location>
        <begin position="27"/>
        <end position="33"/>
    </location>
</feature>
<feature type="strand" evidence="9">
    <location>
        <begin position="35"/>
        <end position="37"/>
    </location>
</feature>
<feature type="helix" evidence="8">
    <location>
        <begin position="40"/>
        <end position="42"/>
    </location>
</feature>
<feature type="strand" evidence="8">
    <location>
        <begin position="61"/>
        <end position="63"/>
    </location>
</feature>
<feature type="strand" evidence="8">
    <location>
        <begin position="66"/>
        <end position="72"/>
    </location>
</feature>
<feature type="strand" evidence="8">
    <location>
        <begin position="74"/>
        <end position="76"/>
    </location>
</feature>
<feature type="turn" evidence="8">
    <location>
        <begin position="87"/>
        <end position="91"/>
    </location>
</feature>
<feature type="strand" evidence="8">
    <location>
        <begin position="93"/>
        <end position="99"/>
    </location>
</feature>
<feature type="strand" evidence="8">
    <location>
        <begin position="103"/>
        <end position="107"/>
    </location>
</feature>
<feature type="strand" evidence="8">
    <location>
        <begin position="109"/>
        <end position="114"/>
    </location>
</feature>
<feature type="strand" evidence="8">
    <location>
        <begin position="119"/>
        <end position="123"/>
    </location>
</feature>
<feature type="strand" evidence="8">
    <location>
        <begin position="127"/>
        <end position="129"/>
    </location>
</feature>
<feature type="helix" evidence="8">
    <location>
        <begin position="141"/>
        <end position="143"/>
    </location>
</feature>
<feature type="helix" evidence="9">
    <location>
        <begin position="144"/>
        <end position="146"/>
    </location>
</feature>
<feature type="strand" evidence="9">
    <location>
        <begin position="156"/>
        <end position="158"/>
    </location>
</feature>
<feature type="helix" evidence="8">
    <location>
        <begin position="162"/>
        <end position="164"/>
    </location>
</feature>
<feature type="strand" evidence="8">
    <location>
        <begin position="168"/>
        <end position="170"/>
    </location>
</feature>
<feature type="strand" evidence="8">
    <location>
        <begin position="172"/>
        <end position="179"/>
    </location>
</feature>
<feature type="helix" evidence="8">
    <location>
        <begin position="184"/>
        <end position="188"/>
    </location>
</feature>
<feature type="turn" evidence="8">
    <location>
        <begin position="189"/>
        <end position="191"/>
    </location>
</feature>
<feature type="strand" evidence="8">
    <location>
        <begin position="193"/>
        <end position="199"/>
    </location>
</feature>
<feature type="strand" evidence="9">
    <location>
        <begin position="204"/>
        <end position="210"/>
    </location>
</feature>
<feature type="strand" evidence="8">
    <location>
        <begin position="211"/>
        <end position="223"/>
    </location>
</feature>
<feature type="helix" evidence="8">
    <location>
        <begin position="224"/>
        <end position="226"/>
    </location>
</feature>
<feature type="strand" evidence="8">
    <location>
        <begin position="227"/>
        <end position="229"/>
    </location>
</feature>
<feature type="strand" evidence="8">
    <location>
        <begin position="250"/>
        <end position="252"/>
    </location>
</feature>
<feature type="strand" evidence="8">
    <location>
        <begin position="266"/>
        <end position="268"/>
    </location>
</feature>
<feature type="strand" evidence="8">
    <location>
        <begin position="271"/>
        <end position="280"/>
    </location>
</feature>
<feature type="strand" evidence="8">
    <location>
        <begin position="287"/>
        <end position="291"/>
    </location>
</feature>
<feature type="strand" evidence="8">
    <location>
        <begin position="296"/>
        <end position="298"/>
    </location>
</feature>
<feature type="strand" evidence="8">
    <location>
        <begin position="301"/>
        <end position="308"/>
    </location>
</feature>
<feature type="strand" evidence="8">
    <location>
        <begin position="313"/>
        <end position="319"/>
    </location>
</feature>
<feature type="strand" evidence="8">
    <location>
        <begin position="324"/>
        <end position="330"/>
    </location>
</feature>
<feature type="strand" evidence="8">
    <location>
        <begin position="341"/>
        <end position="347"/>
    </location>
</feature>
<feature type="strand" evidence="8">
    <location>
        <begin position="400"/>
        <end position="405"/>
    </location>
</feature>
<feature type="strand" evidence="8">
    <location>
        <begin position="1496"/>
        <end position="1508"/>
    </location>
</feature>
<feature type="strand" evidence="8">
    <location>
        <begin position="1531"/>
        <end position="1543"/>
    </location>
</feature>
<feature type="helix" evidence="8">
    <location>
        <begin position="1555"/>
        <end position="1557"/>
    </location>
</feature>
<feature type="strand" evidence="8">
    <location>
        <begin position="1564"/>
        <end position="1566"/>
    </location>
</feature>
<feature type="strand" evidence="8">
    <location>
        <begin position="1568"/>
        <end position="1578"/>
    </location>
</feature>
<feature type="strand" evidence="8">
    <location>
        <begin position="1580"/>
        <end position="1582"/>
    </location>
</feature>
<feature type="strand" evidence="9">
    <location>
        <begin position="1597"/>
        <end position="1599"/>
    </location>
</feature>
<feature type="strand" evidence="8">
    <location>
        <begin position="1613"/>
        <end position="1619"/>
    </location>
</feature>
<feature type="helix" evidence="8">
    <location>
        <begin position="1622"/>
        <end position="1624"/>
    </location>
</feature>
<feature type="strand" evidence="9">
    <location>
        <begin position="1628"/>
        <end position="1630"/>
    </location>
</feature>
<feature type="strand" evidence="8">
    <location>
        <begin position="1632"/>
        <end position="1639"/>
    </location>
</feature>
<feature type="helix" evidence="9">
    <location>
        <begin position="1641"/>
        <end position="1643"/>
    </location>
</feature>
<feature type="helix" evidence="8">
    <location>
        <begin position="1646"/>
        <end position="1650"/>
    </location>
</feature>
<feature type="strand" evidence="8">
    <location>
        <begin position="1653"/>
        <end position="1659"/>
    </location>
</feature>
<feature type="turn" evidence="8">
    <location>
        <begin position="1666"/>
        <end position="1669"/>
    </location>
</feature>
<feature type="strand" evidence="8">
    <location>
        <begin position="1673"/>
        <end position="1685"/>
    </location>
</feature>
<feature type="turn" evidence="8">
    <location>
        <begin position="1686"/>
        <end position="1688"/>
    </location>
</feature>
<feature type="helix" evidence="8">
    <location>
        <begin position="1690"/>
        <end position="1696"/>
    </location>
</feature>
<feature type="helix" evidence="8">
    <location>
        <begin position="1714"/>
        <end position="1716"/>
    </location>
</feature>
<feature type="strand" evidence="8">
    <location>
        <begin position="1717"/>
        <end position="1722"/>
    </location>
</feature>
<feature type="strand" evidence="8">
    <location>
        <begin position="1734"/>
        <end position="1738"/>
    </location>
</feature>
<feature type="strand" evidence="8">
    <location>
        <begin position="1741"/>
        <end position="1747"/>
    </location>
</feature>
<feature type="strand" evidence="8">
    <location>
        <begin position="1756"/>
        <end position="1759"/>
    </location>
</feature>
<feature type="strand" evidence="8">
    <location>
        <begin position="1764"/>
        <end position="1778"/>
    </location>
</feature>
<feature type="strand" evidence="8">
    <location>
        <begin position="1784"/>
        <end position="1789"/>
    </location>
</feature>
<feature type="strand" evidence="8">
    <location>
        <begin position="1795"/>
        <end position="1801"/>
    </location>
</feature>
<feature type="helix" evidence="8">
    <location>
        <begin position="1804"/>
        <end position="1808"/>
    </location>
</feature>
<feature type="strand" evidence="8">
    <location>
        <begin position="1813"/>
        <end position="1818"/>
    </location>
</feature>
<feature type="turn" evidence="7">
    <location>
        <begin position="1981"/>
        <end position="1983"/>
    </location>
</feature>
<feature type="strand" evidence="7">
    <location>
        <begin position="1984"/>
        <end position="1986"/>
    </location>
</feature>
<feature type="helix" evidence="7">
    <location>
        <begin position="1988"/>
        <end position="1990"/>
    </location>
</feature>
<feature type="strand" evidence="7">
    <location>
        <begin position="1991"/>
        <end position="1994"/>
    </location>
</feature>
<feature type="helix" evidence="7">
    <location>
        <begin position="2006"/>
        <end position="2008"/>
    </location>
</feature>
<feature type="strand" evidence="7">
    <location>
        <begin position="2031"/>
        <end position="2047"/>
    </location>
</feature>
<feature type="strand" evidence="7">
    <location>
        <begin position="2049"/>
        <end position="2051"/>
    </location>
</feature>
<feature type="strand" evidence="7">
    <location>
        <begin position="2054"/>
        <end position="2071"/>
    </location>
</feature>
<feature type="strand" evidence="7">
    <location>
        <begin position="2088"/>
        <end position="2091"/>
    </location>
</feature>
<feature type="strand" evidence="7">
    <location>
        <begin position="2094"/>
        <end position="2117"/>
    </location>
</feature>
<feature type="strand" evidence="7">
    <location>
        <begin position="2120"/>
        <end position="2127"/>
    </location>
</feature>
<dbReference type="EMBL" id="U49517">
    <property type="protein sequence ID" value="AAB06705.1"/>
    <property type="molecule type" value="mRNA"/>
</dbReference>
<dbReference type="PIR" id="A25945">
    <property type="entry name" value="A25945"/>
</dbReference>
<dbReference type="PIR" id="T42763">
    <property type="entry name" value="T42763"/>
</dbReference>
<dbReference type="RefSeq" id="NP_999332.1">
    <property type="nucleotide sequence ID" value="NM_214167.1"/>
</dbReference>
<dbReference type="PDB" id="4MO3">
    <property type="method" value="X-ray"/>
    <property type="resolution" value="1.70 A"/>
    <property type="chains" value="M=1971-2129"/>
</dbReference>
<dbReference type="PDB" id="6MF0">
    <property type="method" value="X-ray"/>
    <property type="resolution" value="3.20 A"/>
    <property type="chains" value="A/B=3-405, A/B=762-1820"/>
</dbReference>
<dbReference type="PDB" id="7K66">
    <property type="method" value="X-ray"/>
    <property type="resolution" value="3.92 A"/>
    <property type="chains" value="A=3-405, A=1438-1820"/>
</dbReference>
<dbReference type="PDB" id="7KBT">
    <property type="method" value="X-ray"/>
    <property type="resolution" value="4.15 A"/>
    <property type="chains" value="A=3-405, A=762-1820"/>
</dbReference>
<dbReference type="PDB" id="7S0P">
    <property type="method" value="X-ray"/>
    <property type="resolution" value="1.30 A"/>
    <property type="chains" value="M=1974-2129"/>
</dbReference>
<dbReference type="PDB" id="8G6I">
    <property type="method" value="EM"/>
    <property type="resolution" value="4.23 A"/>
    <property type="chains" value="A=3-405, A=1438-1820"/>
</dbReference>
<dbReference type="PDB" id="8TY1">
    <property type="method" value="EM"/>
    <property type="resolution" value="3.46 A"/>
    <property type="chains" value="A=1-405, A=762-1820"/>
</dbReference>
<dbReference type="PDBsum" id="4MO3"/>
<dbReference type="PDBsum" id="6MF0"/>
<dbReference type="PDBsum" id="7K66"/>
<dbReference type="PDBsum" id="7KBT"/>
<dbReference type="PDBsum" id="7S0P"/>
<dbReference type="PDBsum" id="8G6I"/>
<dbReference type="PDBsum" id="8TY1"/>
<dbReference type="SMR" id="P12263"/>
<dbReference type="FunCoup" id="P12263">
    <property type="interactions" value="192"/>
</dbReference>
<dbReference type="STRING" id="9823.ENSSSCP00000028556"/>
<dbReference type="GlyConnect" id="100">
    <property type="glycosylation" value="22 N-Linked glycans"/>
</dbReference>
<dbReference type="GlyCosmos" id="P12263">
    <property type="glycosylation" value="15 sites, 41 glycans"/>
</dbReference>
<dbReference type="GlyGen" id="P12263">
    <property type="glycosylation" value="17 sites, 41 N-linked glycans (1 site)"/>
</dbReference>
<dbReference type="PaxDb" id="9823-ENSSSCP00000028556"/>
<dbReference type="GeneID" id="397339"/>
<dbReference type="KEGG" id="ssc:397339"/>
<dbReference type="CTD" id="2157"/>
<dbReference type="eggNOG" id="ENOG502QSFZ">
    <property type="taxonomic scope" value="Eukaryota"/>
</dbReference>
<dbReference type="InParanoid" id="P12263"/>
<dbReference type="OrthoDB" id="2121828at2759"/>
<dbReference type="EvolutionaryTrace" id="P12263"/>
<dbReference type="Proteomes" id="UP000008227">
    <property type="component" value="Unplaced"/>
</dbReference>
<dbReference type="Proteomes" id="UP000314985">
    <property type="component" value="Unplaced"/>
</dbReference>
<dbReference type="Proteomes" id="UP000694570">
    <property type="component" value="Unplaced"/>
</dbReference>
<dbReference type="Proteomes" id="UP000694571">
    <property type="component" value="Unplaced"/>
</dbReference>
<dbReference type="Proteomes" id="UP000694720">
    <property type="component" value="Unplaced"/>
</dbReference>
<dbReference type="Proteomes" id="UP000694722">
    <property type="component" value="Unplaced"/>
</dbReference>
<dbReference type="Proteomes" id="UP000694723">
    <property type="component" value="Unplaced"/>
</dbReference>
<dbReference type="Proteomes" id="UP000694724">
    <property type="component" value="Unplaced"/>
</dbReference>
<dbReference type="Proteomes" id="UP000694725">
    <property type="component" value="Unplaced"/>
</dbReference>
<dbReference type="Proteomes" id="UP000694726">
    <property type="component" value="Unplaced"/>
</dbReference>
<dbReference type="Proteomes" id="UP000694727">
    <property type="component" value="Unplaced"/>
</dbReference>
<dbReference type="Proteomes" id="UP000694728">
    <property type="component" value="Unplaced"/>
</dbReference>
<dbReference type="GO" id="GO:0005615">
    <property type="term" value="C:extracellular space"/>
    <property type="evidence" value="ECO:0000318"/>
    <property type="project" value="GO_Central"/>
</dbReference>
<dbReference type="GO" id="GO:0005507">
    <property type="term" value="F:copper ion binding"/>
    <property type="evidence" value="ECO:0007669"/>
    <property type="project" value="InterPro"/>
</dbReference>
<dbReference type="GO" id="GO:0016491">
    <property type="term" value="F:oxidoreductase activity"/>
    <property type="evidence" value="ECO:0007669"/>
    <property type="project" value="InterPro"/>
</dbReference>
<dbReference type="GO" id="GO:0006953">
    <property type="term" value="P:acute-phase response"/>
    <property type="evidence" value="ECO:0007669"/>
    <property type="project" value="UniProtKB-KW"/>
</dbReference>
<dbReference type="GO" id="GO:0007597">
    <property type="term" value="P:blood coagulation, intrinsic pathway"/>
    <property type="evidence" value="ECO:0000318"/>
    <property type="project" value="GO_Central"/>
</dbReference>
<dbReference type="CDD" id="cd00057">
    <property type="entry name" value="FA58C"/>
    <property type="match status" value="2"/>
</dbReference>
<dbReference type="FunFam" id="2.60.120.260:FF:000002">
    <property type="entry name" value="Coagulation factor VIII"/>
    <property type="match status" value="2"/>
</dbReference>
<dbReference type="FunFam" id="2.60.40.420:FF:000047">
    <property type="entry name" value="Coagulation factor VIII"/>
    <property type="match status" value="1"/>
</dbReference>
<dbReference type="FunFam" id="2.60.40.420:FF:000051">
    <property type="entry name" value="Coagulation factor VIII"/>
    <property type="match status" value="1"/>
</dbReference>
<dbReference type="FunFam" id="2.60.40.420:FF:000011">
    <property type="entry name" value="Coagulation factor VIII (Predicted)"/>
    <property type="match status" value="1"/>
</dbReference>
<dbReference type="FunFam" id="2.60.40.420:FF:000026">
    <property type="entry name" value="Coagulation factor VIII (Predicted)"/>
    <property type="match status" value="1"/>
</dbReference>
<dbReference type="FunFam" id="2.60.40.420:FF:000032">
    <property type="entry name" value="Coagulation factor VIII (Predicted)"/>
    <property type="match status" value="1"/>
</dbReference>
<dbReference type="FunFam" id="2.60.40.420:FF:000035">
    <property type="entry name" value="Coagulation factor VIII (Predicted)"/>
    <property type="match status" value="1"/>
</dbReference>
<dbReference type="Gene3D" id="2.60.40.420">
    <property type="entry name" value="Cupredoxins - blue copper proteins"/>
    <property type="match status" value="6"/>
</dbReference>
<dbReference type="Gene3D" id="2.60.120.260">
    <property type="entry name" value="Galactose-binding domain-like"/>
    <property type="match status" value="2"/>
</dbReference>
<dbReference type="InterPro" id="IPR011707">
    <property type="entry name" value="Cu-oxidase-like_N"/>
</dbReference>
<dbReference type="InterPro" id="IPR001117">
    <property type="entry name" value="Cu-oxidase_2nd"/>
</dbReference>
<dbReference type="InterPro" id="IPR011706">
    <property type="entry name" value="Cu-oxidase_C"/>
</dbReference>
<dbReference type="InterPro" id="IPR033138">
    <property type="entry name" value="Cu_oxidase_CS"/>
</dbReference>
<dbReference type="InterPro" id="IPR008972">
    <property type="entry name" value="Cupredoxin"/>
</dbReference>
<dbReference type="InterPro" id="IPR000421">
    <property type="entry name" value="FA58C"/>
</dbReference>
<dbReference type="InterPro" id="IPR024715">
    <property type="entry name" value="Factor_5/8-like"/>
</dbReference>
<dbReference type="InterPro" id="IPR008979">
    <property type="entry name" value="Galactose-bd-like_sf"/>
</dbReference>
<dbReference type="InterPro" id="IPR050633">
    <property type="entry name" value="Neuropilin_MCO_CoagFactor"/>
</dbReference>
<dbReference type="PANTHER" id="PTHR46806:SF7">
    <property type="entry name" value="COAGULATION FACTOR VIII"/>
    <property type="match status" value="1"/>
</dbReference>
<dbReference type="PANTHER" id="PTHR46806">
    <property type="entry name" value="F5/8 TYPE C DOMAIN-CONTAINING PROTEIN"/>
    <property type="match status" value="1"/>
</dbReference>
<dbReference type="Pfam" id="PF00394">
    <property type="entry name" value="Cu-oxidase"/>
    <property type="match status" value="1"/>
</dbReference>
<dbReference type="Pfam" id="PF07731">
    <property type="entry name" value="Cu-oxidase_2"/>
    <property type="match status" value="1"/>
</dbReference>
<dbReference type="Pfam" id="PF07732">
    <property type="entry name" value="Cu-oxidase_3"/>
    <property type="match status" value="2"/>
</dbReference>
<dbReference type="Pfam" id="PF00754">
    <property type="entry name" value="F5_F8_type_C"/>
    <property type="match status" value="2"/>
</dbReference>
<dbReference type="PIRSF" id="PIRSF000354">
    <property type="entry name" value="Factors_V_VIII"/>
    <property type="match status" value="1"/>
</dbReference>
<dbReference type="SMART" id="SM00231">
    <property type="entry name" value="FA58C"/>
    <property type="match status" value="2"/>
</dbReference>
<dbReference type="SUPFAM" id="SSF49503">
    <property type="entry name" value="Cupredoxins"/>
    <property type="match status" value="6"/>
</dbReference>
<dbReference type="SUPFAM" id="SSF49785">
    <property type="entry name" value="Galactose-binding domain-like"/>
    <property type="match status" value="2"/>
</dbReference>
<dbReference type="PROSITE" id="PS01285">
    <property type="entry name" value="FA58C_1"/>
    <property type="match status" value="2"/>
</dbReference>
<dbReference type="PROSITE" id="PS01286">
    <property type="entry name" value="FA58C_2"/>
    <property type="match status" value="2"/>
</dbReference>
<dbReference type="PROSITE" id="PS50022">
    <property type="entry name" value="FA58C_3"/>
    <property type="match status" value="2"/>
</dbReference>
<dbReference type="PROSITE" id="PS00079">
    <property type="entry name" value="MULTICOPPER_OXIDASE1"/>
    <property type="match status" value="3"/>
</dbReference>
<comment type="function">
    <text>Factor VIII, along with calcium and phospholipid, acts as a cofactor for factor IXa when it converts factor X to the activated form, factor Xa.</text>
</comment>
<comment type="subunit">
    <text evidence="1">Interacts with vWF. vWF binding is essential for the stabilization of F8 in circulation (By similarity).</text>
</comment>
<comment type="subcellular location">
    <subcellularLocation>
        <location>Secreted</location>
        <location>Extracellular space</location>
    </subcellularLocation>
</comment>
<comment type="PTM">
    <text evidence="2">Proteolytically cleaved by cathepsin CTSG to produce a partially activated form.</text>
</comment>
<comment type="similarity">
    <text evidence="6">Belongs to the multicopper oxidase family.</text>
</comment>
<organism>
    <name type="scientific">Sus scrofa</name>
    <name type="common">Pig</name>
    <dbReference type="NCBI Taxonomy" id="9823"/>
    <lineage>
        <taxon>Eukaryota</taxon>
        <taxon>Metazoa</taxon>
        <taxon>Chordata</taxon>
        <taxon>Craniata</taxon>
        <taxon>Vertebrata</taxon>
        <taxon>Euteleostomi</taxon>
        <taxon>Mammalia</taxon>
        <taxon>Eutheria</taxon>
        <taxon>Laurasiatheria</taxon>
        <taxon>Artiodactyla</taxon>
        <taxon>Suina</taxon>
        <taxon>Suidae</taxon>
        <taxon>Sus</taxon>
    </lineage>
</organism>
<sequence>MQLELSTCVFLCLLPLGFSAIRRYYLGAVELSWDYRQSELLRELHVDTRFPATAPGALPLGPSVLYKKTVFVEFTDQLFSVARPRPPWMGLLGPTIQAEVYDTVVVTLKNMASHPVSLHAVGVSFWKSSEGAEYEDHTSQREKEDDKVLPGKSQTYVWQVLKENGPTASDPPCLTYSYLSHVDLVKDLNSGLIGALLVCREGSLTRERTQNLHEFVLLFAVFDEGKSWHSARNDSWTRAMDPAPARAQPAMHTVNGYVNRSLPGLIGCHKKSVYWHVIGMGTSPEVHSIFLEGHTFLVRHHRQASLEISPLTFLTAQTFLMDLGQFLLFCHISSHHHGGMEAHVRVESCAEEPQLRRKADEEEDYDDNLYDSDMDVVRLDGDDVSPFIQIRSVAKKHPKTWVHYISAEEEDWDYAPAVPSPSDRSYKSLYLNSGPQRIGRKYKKARFVAYTDVTFKTRKAIPYESGILGPLLYGEVGDTLLIIFKNKASRPYNIYPHGITDVSALHPGRLLKGWKHLKDMPILPGETFKYKWTVTVEDGPTKSDPRCLTRYYSSSINLEKDLASGLIGPLLICYKESVDQRGNQMMSDKRNVILFSVFDENQSWYLAENIQRFLPNPDGLQPQDPEFQASNIMHSINGYVFDSLQLSVCLHEVAYWYILSVGAQTDFLSVFFSGYTFKHKMVYEDTLTLFPFSGETVFMSMENPGLWVLGCHNSDLRNRGMTALLKVYSCDRDIGDYYDNTYEDIPGFLLSGKNVIEPRSFAQNSRPPSASQKQFQTITSPEDDVELDPQSGERTQALEELSVPSGDGSMLLGQNPAPHGSSSSDLQEARNEADDYLPGARERNTAPSAAARLRPELHHSAERVLTPEPEKELKKLDSKMSSSSDLLKTSPTIPSDTLSAETERTHSLGPPHPQVNFRSQLGAIVLGKNSSHFIGAGVPLGSTEEDHESSLGENVSPVESDGIFEKERAHGPASLTKDDVLFKVNISLVKTNKARVYLKTNRKIHIDDAALLTENRASATFMDKNTTASGLNHVSNWIKGPLGKNPLSSERGPSPELLTSSGSGKSVKGQSSGQGRIRVAVEEEELSKGKEMMLPNSELTFLTNSADVQGNDTHSQGKKSREEMERREKLVQEKVDLPQVYTATGTKNFLRNIFHQSTEPSVEGFDGGSHAPVPQDSRSLNDSAERAETHIAHFSAIREEAPLEAPGNRTGPGPRSAVPRRVKQSLKQIRLPLEEIKPERGVVLNATSTRWSESSPILQGAKRNNLSLPFLTLEMAGGQGKISALGKSAAGPLASGKLEKAVLSSAGLSEASGKAEFLPKVRVHREDLLPQKTSNVSCAHGDLGQEIFLQKTRGPVNLNKVNRPGRTPSKLLGPPMPKEWESLEKSPKSTALRTKDIISLPLDRHESNHSIAAKNEGQAETQREAAWTKQGGPGRLCAPKPPVLRRHQRDISLPTFQPEEDKMDYDDIFSTETKGEDFDIYGEDENQDPRSFQKRTRHYFIAAVEQLWDYGMSESPRALRNRAQNGEVPRFKKVVFREFADGSFTQPSYRGELNKHLGLLGPYIRAEVEDNIMVTFKNQASRPYSFYSSLISYPDDQEQGAEPRHNFVQPNETRTYFWKVQHHMAPTEDEFDCKAWAYFSDVDLEKDVHSGLIGPLLICRANTLNAAHGRQVTVQEFALFFTIFDETKSWYFTENVERNCRAPCHLQMEDPTLKENYRFHAINGYVMDTLPGLVMAQNQRIRWYLLSMGSNENIHSIHFSGHVFSVRKKEEYKMAVYNLYPGVFETVEMLPSKVGIWRIECLIGEHLQAGMSTTFLVYSKECQAPLGMASGRIRDFQITASGQYGQWAPKLARLHYSGSINAWSTKDPHSWIKVDLLAPMIIHGIMTQGARQKFSSLYISQFIIMYSLDGRNWQSYRGNSTGTLMVFFGNVDASGIKHNIFNPPIVARYIRLHPTHYSIRSTLRMELMGCDLNSCSMPLGMQNKAISDSQITASSHLSNIFATWSPSQARLHLQGRTNAWRPRVSSAEEWLQVDLQKTVKVTGITTQGVKSLLSSMYVKEFLVSSSQDGRRWTLFLQDGHTKVFQGNQDSSTPVVNALDPPLFTRYLRIHPTSWAQHIALRLEVLGCEAQDLY</sequence>
<evidence type="ECO:0000250" key="1"/>
<evidence type="ECO:0000250" key="2">
    <source>
        <dbReference type="UniProtKB" id="P00451"/>
    </source>
</evidence>
<evidence type="ECO:0000255" key="3"/>
<evidence type="ECO:0000255" key="4">
    <source>
        <dbReference type="PROSITE-ProRule" id="PRU00081"/>
    </source>
</evidence>
<evidence type="ECO:0000256" key="5">
    <source>
        <dbReference type="SAM" id="MobiDB-lite"/>
    </source>
</evidence>
<evidence type="ECO:0000305" key="6"/>
<evidence type="ECO:0007829" key="7">
    <source>
        <dbReference type="PDB" id="4MO3"/>
    </source>
</evidence>
<evidence type="ECO:0007829" key="8">
    <source>
        <dbReference type="PDB" id="6MF0"/>
    </source>
</evidence>
<evidence type="ECO:0007829" key="9">
    <source>
        <dbReference type="PDB" id="8TY1"/>
    </source>
</evidence>
<reference key="1">
    <citation type="submission" date="1996-05" db="EMBL/GenBank/DDBJ databases">
        <authorList>
            <person name="Healey J.F."/>
            <person name="Lubin I.M."/>
            <person name="Lollar P."/>
        </authorList>
    </citation>
    <scope>NUCLEOTIDE SEQUENCE [MRNA]</scope>
</reference>
<reference key="2">
    <citation type="journal article" date="1986" name="Proc. Natl. Acad. Sci. U.S.A.">
        <title>A large region (approximately equal to 95 kDa) of human factor VIII is dispensable for in vitro procoagulant activity.</title>
        <authorList>
            <person name="Toole J.J."/>
            <person name="Pittman D.D."/>
            <person name="Orr E.C."/>
            <person name="Murtha P."/>
            <person name="Wasley L.C."/>
            <person name="Kaufman R.J."/>
        </authorList>
    </citation>
    <scope>NUCLEOTIDE SEQUENCE [MRNA] OF 705-1573</scope>
</reference>
<reference key="3">
    <citation type="journal article" date="1994" name="J. Biol. Chem.">
        <title>Elimination of a major inhibitor epitope in factor VIII.</title>
        <authorList>
            <person name="Lubin I.M."/>
            <person name="Healey J.F."/>
            <person name="Scandella D."/>
            <person name="Runge M.S."/>
            <person name="Lollar P."/>
        </authorList>
    </citation>
    <scope>NUCLEOTIDE SEQUENCE [MRNA] OF 392-759</scope>
</reference>
<accession>P12263</accession>
<accession>Q95243</accession>